<protein>
    <recommendedName>
        <fullName evidence="1">GTPase Obg</fullName>
        <ecNumber evidence="1">3.6.5.-</ecNumber>
    </recommendedName>
    <alternativeName>
        <fullName evidence="1">GTP-binding protein Obg</fullName>
    </alternativeName>
</protein>
<name>OBG_BACCZ</name>
<keyword id="KW-0963">Cytoplasm</keyword>
<keyword id="KW-0342">GTP-binding</keyword>
<keyword id="KW-0378">Hydrolase</keyword>
<keyword id="KW-0460">Magnesium</keyword>
<keyword id="KW-0479">Metal-binding</keyword>
<keyword id="KW-0547">Nucleotide-binding</keyword>
<proteinExistence type="inferred from homology"/>
<gene>
    <name evidence="1" type="primary">obg</name>
    <name type="ordered locus">BCE33L4185</name>
</gene>
<dbReference type="EC" id="3.6.5.-" evidence="1"/>
<dbReference type="EMBL" id="CP000001">
    <property type="protein sequence ID" value="AAU16084.1"/>
    <property type="molecule type" value="Genomic_DNA"/>
</dbReference>
<dbReference type="SMR" id="Q634A3"/>
<dbReference type="KEGG" id="bcz:BCE33L4185"/>
<dbReference type="PATRIC" id="fig|288681.22.peg.1198"/>
<dbReference type="Proteomes" id="UP000002612">
    <property type="component" value="Chromosome"/>
</dbReference>
<dbReference type="GO" id="GO:0005737">
    <property type="term" value="C:cytoplasm"/>
    <property type="evidence" value="ECO:0007669"/>
    <property type="project" value="UniProtKB-SubCell"/>
</dbReference>
<dbReference type="GO" id="GO:0005525">
    <property type="term" value="F:GTP binding"/>
    <property type="evidence" value="ECO:0007669"/>
    <property type="project" value="UniProtKB-UniRule"/>
</dbReference>
<dbReference type="GO" id="GO:0003924">
    <property type="term" value="F:GTPase activity"/>
    <property type="evidence" value="ECO:0007669"/>
    <property type="project" value="UniProtKB-UniRule"/>
</dbReference>
<dbReference type="GO" id="GO:0000287">
    <property type="term" value="F:magnesium ion binding"/>
    <property type="evidence" value="ECO:0007669"/>
    <property type="project" value="InterPro"/>
</dbReference>
<dbReference type="GO" id="GO:0042254">
    <property type="term" value="P:ribosome biogenesis"/>
    <property type="evidence" value="ECO:0007669"/>
    <property type="project" value="UniProtKB-UniRule"/>
</dbReference>
<dbReference type="CDD" id="cd01898">
    <property type="entry name" value="Obg"/>
    <property type="match status" value="1"/>
</dbReference>
<dbReference type="FunFam" id="2.70.210.12:FF:000001">
    <property type="entry name" value="GTPase Obg"/>
    <property type="match status" value="1"/>
</dbReference>
<dbReference type="FunFam" id="3.40.50.300:FF:000515">
    <property type="entry name" value="GTPase Obg"/>
    <property type="match status" value="1"/>
</dbReference>
<dbReference type="Gene3D" id="3.30.300.350">
    <property type="entry name" value="GTP-binding protein OBG, C-terminal domain"/>
    <property type="match status" value="1"/>
</dbReference>
<dbReference type="Gene3D" id="2.70.210.12">
    <property type="entry name" value="GTP1/OBG domain"/>
    <property type="match status" value="1"/>
</dbReference>
<dbReference type="Gene3D" id="3.40.50.300">
    <property type="entry name" value="P-loop containing nucleotide triphosphate hydrolases"/>
    <property type="match status" value="1"/>
</dbReference>
<dbReference type="HAMAP" id="MF_01454">
    <property type="entry name" value="GTPase_Obg"/>
    <property type="match status" value="1"/>
</dbReference>
<dbReference type="InterPro" id="IPR031167">
    <property type="entry name" value="G_OBG"/>
</dbReference>
<dbReference type="InterPro" id="IPR006073">
    <property type="entry name" value="GTP-bd"/>
</dbReference>
<dbReference type="InterPro" id="IPR014100">
    <property type="entry name" value="GTP-bd_Obg/CgtA"/>
</dbReference>
<dbReference type="InterPro" id="IPR036346">
    <property type="entry name" value="GTP-bd_prot_GTP1/OBG_C_sf"/>
</dbReference>
<dbReference type="InterPro" id="IPR006074">
    <property type="entry name" value="GTP1-OBG_CS"/>
</dbReference>
<dbReference type="InterPro" id="IPR006169">
    <property type="entry name" value="GTP1_OBG_dom"/>
</dbReference>
<dbReference type="InterPro" id="IPR036726">
    <property type="entry name" value="GTP1_OBG_dom_sf"/>
</dbReference>
<dbReference type="InterPro" id="IPR045086">
    <property type="entry name" value="OBG_GTPase"/>
</dbReference>
<dbReference type="InterPro" id="IPR015349">
    <property type="entry name" value="OCT_dom"/>
</dbReference>
<dbReference type="InterPro" id="IPR027417">
    <property type="entry name" value="P-loop_NTPase"/>
</dbReference>
<dbReference type="InterPro" id="IPR005225">
    <property type="entry name" value="Small_GTP-bd"/>
</dbReference>
<dbReference type="NCBIfam" id="TIGR02729">
    <property type="entry name" value="Obg_CgtA"/>
    <property type="match status" value="1"/>
</dbReference>
<dbReference type="NCBIfam" id="TIGR03595">
    <property type="entry name" value="Obg_CgtA_exten"/>
    <property type="match status" value="1"/>
</dbReference>
<dbReference type="NCBIfam" id="NF008954">
    <property type="entry name" value="PRK12296.1"/>
    <property type="match status" value="1"/>
</dbReference>
<dbReference type="NCBIfam" id="NF008955">
    <property type="entry name" value="PRK12297.1"/>
    <property type="match status" value="1"/>
</dbReference>
<dbReference type="NCBIfam" id="NF008956">
    <property type="entry name" value="PRK12299.1"/>
    <property type="match status" value="1"/>
</dbReference>
<dbReference type="NCBIfam" id="TIGR00231">
    <property type="entry name" value="small_GTP"/>
    <property type="match status" value="1"/>
</dbReference>
<dbReference type="PANTHER" id="PTHR11702">
    <property type="entry name" value="DEVELOPMENTALLY REGULATED GTP-BINDING PROTEIN-RELATED"/>
    <property type="match status" value="1"/>
</dbReference>
<dbReference type="PANTHER" id="PTHR11702:SF31">
    <property type="entry name" value="MITOCHONDRIAL RIBOSOME-ASSOCIATED GTPASE 2"/>
    <property type="match status" value="1"/>
</dbReference>
<dbReference type="Pfam" id="PF09269">
    <property type="entry name" value="DUF1967"/>
    <property type="match status" value="1"/>
</dbReference>
<dbReference type="Pfam" id="PF01018">
    <property type="entry name" value="GTP1_OBG"/>
    <property type="match status" value="1"/>
</dbReference>
<dbReference type="Pfam" id="PF01926">
    <property type="entry name" value="MMR_HSR1"/>
    <property type="match status" value="1"/>
</dbReference>
<dbReference type="PIRSF" id="PIRSF002401">
    <property type="entry name" value="GTP_bd_Obg/CgtA"/>
    <property type="match status" value="1"/>
</dbReference>
<dbReference type="PRINTS" id="PR00326">
    <property type="entry name" value="GTP1OBG"/>
</dbReference>
<dbReference type="SUPFAM" id="SSF102741">
    <property type="entry name" value="Obg GTP-binding protein C-terminal domain"/>
    <property type="match status" value="1"/>
</dbReference>
<dbReference type="SUPFAM" id="SSF82051">
    <property type="entry name" value="Obg GTP-binding protein N-terminal domain"/>
    <property type="match status" value="1"/>
</dbReference>
<dbReference type="SUPFAM" id="SSF52540">
    <property type="entry name" value="P-loop containing nucleoside triphosphate hydrolases"/>
    <property type="match status" value="1"/>
</dbReference>
<dbReference type="PROSITE" id="PS51710">
    <property type="entry name" value="G_OBG"/>
    <property type="match status" value="1"/>
</dbReference>
<dbReference type="PROSITE" id="PS00905">
    <property type="entry name" value="GTP1_OBG"/>
    <property type="match status" value="1"/>
</dbReference>
<dbReference type="PROSITE" id="PS51883">
    <property type="entry name" value="OBG"/>
    <property type="match status" value="1"/>
</dbReference>
<dbReference type="PROSITE" id="PS51881">
    <property type="entry name" value="OCT"/>
    <property type="match status" value="1"/>
</dbReference>
<evidence type="ECO:0000255" key="1">
    <source>
        <dbReference type="HAMAP-Rule" id="MF_01454"/>
    </source>
</evidence>
<evidence type="ECO:0000255" key="2">
    <source>
        <dbReference type="PROSITE-ProRule" id="PRU01229"/>
    </source>
</evidence>
<evidence type="ECO:0000255" key="3">
    <source>
        <dbReference type="PROSITE-ProRule" id="PRU01231"/>
    </source>
</evidence>
<accession>Q634A3</accession>
<sequence length="428" mass="47211">MFVDQVKIYVKGGDGGNGMVAYRREKYVPKGGPAGGDGGKGADVVFIVEEGLRTLMDFRYQRHFKADRGQHGMSKGQHGRKSEDLLVKVPPGTVVKDEKTGQILADLVTHGQTAVIAKGGRGGRGNSRFATATNPAPEIAENGEPGQERDVILELKVLADVGLVGFPSVGKSTLLSVVSSARPKIAEYHFTTIVPNLGVVETGDNRSFVMADLPGLIEGAHAGVGLGHQFLRHIERTRVIVHVIDMSGLEGRDPYEDYVTINNELKEYNLRLTERPQVVVANKMDMPDAEENLQAFKEKVGDEVKIFPISAVTKQGVRDLLFEVANLIETTPEFPIHEVVDESDTSVMYKFETEGVKFDITRESDGTFVISGYDIEKTFKMTDFSRDESVRRFARQMRGMGIDEALRARGAKDGDIVKILEYEFEFID</sequence>
<organism>
    <name type="scientific">Bacillus cereus (strain ZK / E33L)</name>
    <dbReference type="NCBI Taxonomy" id="288681"/>
    <lineage>
        <taxon>Bacteria</taxon>
        <taxon>Bacillati</taxon>
        <taxon>Bacillota</taxon>
        <taxon>Bacilli</taxon>
        <taxon>Bacillales</taxon>
        <taxon>Bacillaceae</taxon>
        <taxon>Bacillus</taxon>
        <taxon>Bacillus cereus group</taxon>
    </lineage>
</organism>
<feature type="chain" id="PRO_0000385723" description="GTPase Obg">
    <location>
        <begin position="1"/>
        <end position="428"/>
    </location>
</feature>
<feature type="domain" description="Obg" evidence="3">
    <location>
        <begin position="1"/>
        <end position="158"/>
    </location>
</feature>
<feature type="domain" description="OBG-type G" evidence="1">
    <location>
        <begin position="159"/>
        <end position="329"/>
    </location>
</feature>
<feature type="domain" description="OCT" evidence="2">
    <location>
        <begin position="350"/>
        <end position="428"/>
    </location>
</feature>
<feature type="binding site" evidence="1">
    <location>
        <begin position="165"/>
        <end position="172"/>
    </location>
    <ligand>
        <name>GTP</name>
        <dbReference type="ChEBI" id="CHEBI:37565"/>
    </ligand>
</feature>
<feature type="binding site" evidence="1">
    <location>
        <position position="172"/>
    </location>
    <ligand>
        <name>Mg(2+)</name>
        <dbReference type="ChEBI" id="CHEBI:18420"/>
    </ligand>
</feature>
<feature type="binding site" evidence="1">
    <location>
        <begin position="190"/>
        <end position="194"/>
    </location>
    <ligand>
        <name>GTP</name>
        <dbReference type="ChEBI" id="CHEBI:37565"/>
    </ligand>
</feature>
<feature type="binding site" evidence="1">
    <location>
        <position position="192"/>
    </location>
    <ligand>
        <name>Mg(2+)</name>
        <dbReference type="ChEBI" id="CHEBI:18420"/>
    </ligand>
</feature>
<feature type="binding site" evidence="1">
    <location>
        <begin position="212"/>
        <end position="215"/>
    </location>
    <ligand>
        <name>GTP</name>
        <dbReference type="ChEBI" id="CHEBI:37565"/>
    </ligand>
</feature>
<feature type="binding site" evidence="1">
    <location>
        <begin position="282"/>
        <end position="285"/>
    </location>
    <ligand>
        <name>GTP</name>
        <dbReference type="ChEBI" id="CHEBI:37565"/>
    </ligand>
</feature>
<feature type="binding site" evidence="1">
    <location>
        <begin position="310"/>
        <end position="312"/>
    </location>
    <ligand>
        <name>GTP</name>
        <dbReference type="ChEBI" id="CHEBI:37565"/>
    </ligand>
</feature>
<comment type="function">
    <text evidence="1">An essential GTPase which binds GTP, GDP and possibly (p)ppGpp with moderate affinity, with high nucleotide exchange rates and a fairly low GTP hydrolysis rate. Plays a role in control of the cell cycle, stress response, ribosome biogenesis and in those bacteria that undergo differentiation, in morphogenesis control.</text>
</comment>
<comment type="cofactor">
    <cofactor evidence="1">
        <name>Mg(2+)</name>
        <dbReference type="ChEBI" id="CHEBI:18420"/>
    </cofactor>
</comment>
<comment type="subunit">
    <text evidence="1">Monomer.</text>
</comment>
<comment type="subcellular location">
    <subcellularLocation>
        <location evidence="1">Cytoplasm</location>
    </subcellularLocation>
</comment>
<comment type="similarity">
    <text evidence="1">Belongs to the TRAFAC class OBG-HflX-like GTPase superfamily. OBG GTPase family.</text>
</comment>
<reference key="1">
    <citation type="journal article" date="2006" name="J. Bacteriol.">
        <title>Pathogenomic sequence analysis of Bacillus cereus and Bacillus thuringiensis isolates closely related to Bacillus anthracis.</title>
        <authorList>
            <person name="Han C.S."/>
            <person name="Xie G."/>
            <person name="Challacombe J.F."/>
            <person name="Altherr M.R."/>
            <person name="Bhotika S.S."/>
            <person name="Bruce D."/>
            <person name="Campbell C.S."/>
            <person name="Campbell M.L."/>
            <person name="Chen J."/>
            <person name="Chertkov O."/>
            <person name="Cleland C."/>
            <person name="Dimitrijevic M."/>
            <person name="Doggett N.A."/>
            <person name="Fawcett J.J."/>
            <person name="Glavina T."/>
            <person name="Goodwin L.A."/>
            <person name="Hill K.K."/>
            <person name="Hitchcock P."/>
            <person name="Jackson P.J."/>
            <person name="Keim P."/>
            <person name="Kewalramani A.R."/>
            <person name="Longmire J."/>
            <person name="Lucas S."/>
            <person name="Malfatti S."/>
            <person name="McMurry K."/>
            <person name="Meincke L.J."/>
            <person name="Misra M."/>
            <person name="Moseman B.L."/>
            <person name="Mundt M."/>
            <person name="Munk A.C."/>
            <person name="Okinaka R.T."/>
            <person name="Parson-Quintana B."/>
            <person name="Reilly L.P."/>
            <person name="Richardson P."/>
            <person name="Robinson D.L."/>
            <person name="Rubin E."/>
            <person name="Saunders E."/>
            <person name="Tapia R."/>
            <person name="Tesmer J.G."/>
            <person name="Thayer N."/>
            <person name="Thompson L.S."/>
            <person name="Tice H."/>
            <person name="Ticknor L.O."/>
            <person name="Wills P.L."/>
            <person name="Brettin T.S."/>
            <person name="Gilna P."/>
        </authorList>
    </citation>
    <scope>NUCLEOTIDE SEQUENCE [LARGE SCALE GENOMIC DNA]</scope>
    <source>
        <strain>ZK / E33L</strain>
    </source>
</reference>